<sequence>MLKLWKVVRPARQLELHRLILLLIAFSLGSMGFLAYYVSTSPKAKEPLPLPLGDCSSSGAAGGPGPVRPPVPPRPPRPPETARTEPVVLVFVESAYSQLGQEIVAILESSRFRYSTELAPGRGDMPTLTDHTRGRYVLVIYENLLKYVNLDAWSRELLDRYCVEYGVGIIGFFRAHEHSLLSAQLKGFPLFLHSNLGLRDYQVNPTAPLLHLTRPSRLEPGPLPGDDWTIFQSNHRTYEPVLLGSLRPAEPPVPGPVARRARLPTVVQDLGVHDGIQRVLFGHGLSFWLHKLVFRDAGGYLTGKGLLWDLDRYILVDIDDIFVGKEGTRMKVADVEALLTTQNKLRTLVPNFTFNLGFSGKFYHTGTEEEDAGDDMLLNHRREFWWFPHMWSHMQPHLFHNRSVLADQMRLNKQFALEHGIPTDLGYAVAPHHSGVYPIHTQLYEAWKSVWGIQVTSTEEYPHLRPARYRRGFIHNGIMVLPRQTCGLFTHTIFYNEYPGGSRELDRSIRGGELFLTVLLNPISIFMTHLSNYGNDRLGLYTFESLVRFLQCWTSLRLQTLPPVPLGRKYFDLFPQERSPLWQNPCDDKRHKDIWSKEKTCDRLPKFLIVGPQKTGTTAIHFFLSLHPAVTSSFPSPSTFEEIQFFNGPNYHKGIDWYMDFFPVPSNASTDFLFEKSATYFDSEVVPRRGAALLPRAKIITVLTNPADRAYSWYQHQRAHGDPVALNYTFYQVITASSQDPPALRSLQNRCLVPGYYSTHLQRWLTYYPSGQLLIVDGQELRTNPAASMEIIQKFLGITPFLNYTRTLRFDEDKGFWCQGLEGGKTRCLGKSKGRKYPDMDAESRLFLTDFFRNHNLELSKLLSRLGQPVPSWLREELQHSSSG</sequence>
<evidence type="ECO:0000250" key="1"/>
<evidence type="ECO:0000250" key="2">
    <source>
        <dbReference type="UniProtKB" id="P52849"/>
    </source>
</evidence>
<evidence type="ECO:0000255" key="3"/>
<evidence type="ECO:0000256" key="4">
    <source>
        <dbReference type="SAM" id="MobiDB-lite"/>
    </source>
</evidence>
<evidence type="ECO:0000269" key="5">
    <source>
    </source>
</evidence>
<evidence type="ECO:0000305" key="6"/>
<comment type="function">
    <text evidence="2 5">Essential bifunctional enzyme that catalyzes both the N-deacetylation and the N-sulfation of glucosamine (GlcNAc) of the glycosaminoglycan in heparan sulfate. Modifies the GlcNAc-GlcA disaccharide repeating sugar backbone to make N-sulfated heparosan, a prerequisite substrate for later modifications in heparin biosynthesis. Plays a role in determining the extent and pattern of sulfation of heparan sulfate. Required for the exosomal release of SDCBP, CD63 and syndecan (By similarity).</text>
</comment>
<comment type="catalytic activity">
    <reaction>
        <text>alpha-D-glucosaminyl-[heparan sulfate](n) + 3'-phosphoadenylyl sulfate = N-sulfo-alpha-D-glucosaminyl-[heparan sulfate](n) + adenosine 3',5'-bisphosphate + 2 H(+)</text>
        <dbReference type="Rhea" id="RHEA:21980"/>
        <dbReference type="Rhea" id="RHEA-COMP:9830"/>
        <dbReference type="Rhea" id="RHEA-COMP:14602"/>
        <dbReference type="ChEBI" id="CHEBI:15378"/>
        <dbReference type="ChEBI" id="CHEBI:58339"/>
        <dbReference type="ChEBI" id="CHEBI:58343"/>
        <dbReference type="ChEBI" id="CHEBI:58388"/>
        <dbReference type="ChEBI" id="CHEBI:140572"/>
        <dbReference type="EC" id="2.8.2.8"/>
    </reaction>
</comment>
<comment type="pathway">
    <text>Glycan metabolism; heparan sulfate biosynthesis.</text>
</comment>
<comment type="pathway">
    <text>Glycan metabolism; heparin biosynthesis.</text>
</comment>
<comment type="subunit">
    <text evidence="1">Monomer.</text>
</comment>
<comment type="subcellular location">
    <subcellularLocation>
        <location evidence="1">Golgi apparatus membrane</location>
        <topology evidence="1">Single-pass type II membrane protein</topology>
    </subcellularLocation>
</comment>
<comment type="miscellaneous">
    <text>The presence of 4 different heparan sulfate N-deacetylase/N-sulfotransferase enzymes in mammals, as well as differences in their enzyme activity suggest that some initiate heparan sulfate modification/sulfation reactions, whereas other later on fill in or extend already modified heparan sulfate sequences.</text>
</comment>
<comment type="similarity">
    <text evidence="6">Belongs to the sulfotransferase 1 family. NDST subfamily.</text>
</comment>
<dbReference type="EC" id="2.8.2.8"/>
<dbReference type="EC" id="3.-.-.-"/>
<dbReference type="EC" id="2.8.2.-"/>
<dbReference type="EMBL" id="AF064825">
    <property type="protein sequence ID" value="AAC77921.1"/>
    <property type="molecule type" value="mRNA"/>
</dbReference>
<dbReference type="EMBL" id="AB098922">
    <property type="protein sequence ID" value="BAC56412.1"/>
    <property type="molecule type" value="mRNA"/>
</dbReference>
<dbReference type="SMR" id="O97583"/>
<dbReference type="FunCoup" id="O97583">
    <property type="interactions" value="1149"/>
</dbReference>
<dbReference type="STRING" id="9913.ENSBTAP00000016827"/>
<dbReference type="GlyCosmos" id="O97583">
    <property type="glycosylation" value="5 sites, No reported glycans"/>
</dbReference>
<dbReference type="GlyGen" id="O97583">
    <property type="glycosylation" value="5 sites"/>
</dbReference>
<dbReference type="PaxDb" id="9913-ENSBTAP00000016827"/>
<dbReference type="eggNOG" id="KOG3703">
    <property type="taxonomic scope" value="Eukaryota"/>
</dbReference>
<dbReference type="InParanoid" id="O97583"/>
<dbReference type="OrthoDB" id="8958249at2759"/>
<dbReference type="BRENDA" id="2.8.2.8">
    <property type="organism ID" value="908"/>
</dbReference>
<dbReference type="UniPathway" id="UPA00756"/>
<dbReference type="UniPathway" id="UPA00862"/>
<dbReference type="Proteomes" id="UP000009136">
    <property type="component" value="Unplaced"/>
</dbReference>
<dbReference type="GO" id="GO:0005794">
    <property type="term" value="C:Golgi apparatus"/>
    <property type="evidence" value="ECO:0000318"/>
    <property type="project" value="GO_Central"/>
</dbReference>
<dbReference type="GO" id="GO:0000139">
    <property type="term" value="C:Golgi membrane"/>
    <property type="evidence" value="ECO:0007669"/>
    <property type="project" value="UniProtKB-SubCell"/>
</dbReference>
<dbReference type="GO" id="GO:0019213">
    <property type="term" value="F:deacetylase activity"/>
    <property type="evidence" value="ECO:0000318"/>
    <property type="project" value="GO_Central"/>
</dbReference>
<dbReference type="GO" id="GO:0015016">
    <property type="term" value="F:heparan sulfate N-sulfotransferase activity"/>
    <property type="evidence" value="ECO:0000318"/>
    <property type="project" value="GO_Central"/>
</dbReference>
<dbReference type="GO" id="GO:0016787">
    <property type="term" value="F:hydrolase activity"/>
    <property type="evidence" value="ECO:0007669"/>
    <property type="project" value="UniProtKB-KW"/>
</dbReference>
<dbReference type="GO" id="GO:0015012">
    <property type="term" value="P:heparan sulfate proteoglycan biosynthetic process"/>
    <property type="evidence" value="ECO:0007669"/>
    <property type="project" value="UniProtKB-UniPathway"/>
</dbReference>
<dbReference type="GO" id="GO:0030210">
    <property type="term" value="P:heparin proteoglycan biosynthetic process"/>
    <property type="evidence" value="ECO:0007669"/>
    <property type="project" value="UniProtKB-UniPathway"/>
</dbReference>
<dbReference type="FunFam" id="3.40.50.300:FF:000176">
    <property type="entry name" value="bifunctional heparan sulfate N-deacetylase/N-sulfotransferase 1"/>
    <property type="match status" value="1"/>
</dbReference>
<dbReference type="Gene3D" id="3.40.50.300">
    <property type="entry name" value="P-loop containing nucleotide triphosphate hydrolases"/>
    <property type="match status" value="1"/>
</dbReference>
<dbReference type="InterPro" id="IPR021930">
    <property type="entry name" value="Heparan_SO4_deacetylase_dom"/>
</dbReference>
<dbReference type="InterPro" id="IPR056793">
    <property type="entry name" value="HSNSD_N"/>
</dbReference>
<dbReference type="InterPro" id="IPR037359">
    <property type="entry name" value="NST/OST"/>
</dbReference>
<dbReference type="InterPro" id="IPR027417">
    <property type="entry name" value="P-loop_NTPase"/>
</dbReference>
<dbReference type="InterPro" id="IPR000863">
    <property type="entry name" value="Sulfotransferase_dom"/>
</dbReference>
<dbReference type="PANTHER" id="PTHR10605:SF53">
    <property type="entry name" value="BIFUNCTIONAL HEPARAN SULFATE N-DEACETYLASE_N-SULFOTRANSFERASE 2"/>
    <property type="match status" value="1"/>
</dbReference>
<dbReference type="PANTHER" id="PTHR10605">
    <property type="entry name" value="HEPARAN SULFATE SULFOTRANSFERASE"/>
    <property type="match status" value="1"/>
</dbReference>
<dbReference type="Pfam" id="PF12062">
    <property type="entry name" value="HSNSD-CE"/>
    <property type="match status" value="1"/>
</dbReference>
<dbReference type="Pfam" id="PF25119">
    <property type="entry name" value="HSNSD_N"/>
    <property type="match status" value="1"/>
</dbReference>
<dbReference type="Pfam" id="PF00685">
    <property type="entry name" value="Sulfotransfer_1"/>
    <property type="match status" value="1"/>
</dbReference>
<dbReference type="SUPFAM" id="SSF52540">
    <property type="entry name" value="P-loop containing nucleoside triphosphate hydrolases"/>
    <property type="match status" value="1"/>
</dbReference>
<reference key="1">
    <citation type="journal article" date="1998" name="J. Biol. Chem.">
        <title>The putative heparin-specific N-acetylglucosaminyl N-deacetylase/N-sulfotransferase also occurs in non-heparin-producing cells.</title>
        <authorList>
            <person name="Toma L."/>
            <person name="Berninsone P."/>
            <person name="Hirschberg C.B."/>
        </authorList>
    </citation>
    <scope>NUCLEOTIDE SEQUENCE [MRNA]</scope>
    <scope>FUNCTION</scope>
    <source>
        <tissue>Trachea</tissue>
    </source>
</reference>
<reference key="2">
    <citation type="journal article" date="2003" name="Mol. Reprod. Dev.">
        <title>Characterization of gene expression profiles in early bovine pregnancy using a custom cDNA microarray.</title>
        <authorList>
            <person name="Ishiwata H."/>
            <person name="Katsuma S."/>
            <person name="Kizaki K."/>
            <person name="Patel O.V."/>
            <person name="Nakano H."/>
            <person name="Takahashi T."/>
            <person name="Imai K."/>
            <person name="Hirasawa A."/>
            <person name="Shiojima S."/>
            <person name="Ikawa H."/>
            <person name="Suzuki Y."/>
            <person name="Tsujimoto G."/>
            <person name="Izaike Y."/>
            <person name="Todoroki J."/>
            <person name="Hashizume K."/>
        </authorList>
    </citation>
    <scope>NUCLEOTIDE SEQUENCE [MRNA] OF 688-884</scope>
</reference>
<organism>
    <name type="scientific">Bos taurus</name>
    <name type="common">Bovine</name>
    <dbReference type="NCBI Taxonomy" id="9913"/>
    <lineage>
        <taxon>Eukaryota</taxon>
        <taxon>Metazoa</taxon>
        <taxon>Chordata</taxon>
        <taxon>Craniata</taxon>
        <taxon>Vertebrata</taxon>
        <taxon>Euteleostomi</taxon>
        <taxon>Mammalia</taxon>
        <taxon>Eutheria</taxon>
        <taxon>Laurasiatheria</taxon>
        <taxon>Artiodactyla</taxon>
        <taxon>Ruminantia</taxon>
        <taxon>Pecora</taxon>
        <taxon>Bovidae</taxon>
        <taxon>Bovinae</taxon>
        <taxon>Bos</taxon>
    </lineage>
</organism>
<accession>O97583</accession>
<accession>Q862Q7</accession>
<accession>Q862Y7</accession>
<protein>
    <recommendedName>
        <fullName>Bifunctional heparan sulfate N-deacetylase/N-sulfotransferase 2</fullName>
        <ecNumber>2.8.2.8</ecNumber>
    </recommendedName>
    <alternativeName>
        <fullName>CCL44</fullName>
    </alternativeName>
    <alternativeName>
        <fullName>Glucosaminyl N-deacetylase/N-sulfotransferase 2</fullName>
        <shortName>NDST-2</shortName>
    </alternativeName>
    <domain>
        <recommendedName>
            <fullName>Heparan sulfate N-deacetylase 2</fullName>
            <ecNumber>3.-.-.-</ecNumber>
        </recommendedName>
    </domain>
    <domain>
        <recommendedName>
            <fullName>Heparan sulfate N-sulfotransferase 2</fullName>
            <ecNumber>2.8.2.-</ecNumber>
        </recommendedName>
    </domain>
</protein>
<feature type="chain" id="PRO_0000225658" description="Bifunctional heparan sulfate N-deacetylase/N-sulfotransferase 2">
    <location>
        <begin position="1"/>
        <end position="884"/>
    </location>
</feature>
<feature type="topological domain" description="Cytoplasmic" evidence="3">
    <location>
        <begin position="1"/>
        <end position="18"/>
    </location>
</feature>
<feature type="transmembrane region" description="Helical; Signal-anchor for type II membrane protein" evidence="3">
    <location>
        <begin position="19"/>
        <end position="39"/>
    </location>
</feature>
<feature type="topological domain" description="Lumenal" evidence="3">
    <location>
        <begin position="40"/>
        <end position="884"/>
    </location>
</feature>
<feature type="region of interest" description="Heparan sulfate N-deacetylase 2">
    <location>
        <begin position="41"/>
        <end position="598"/>
    </location>
</feature>
<feature type="region of interest" description="Disordered" evidence="4">
    <location>
        <begin position="49"/>
        <end position="82"/>
    </location>
</feature>
<feature type="region of interest" description="Heparan sulfate N-sulfotransferase 2">
    <location>
        <begin position="599"/>
        <end position="884"/>
    </location>
</feature>
<feature type="compositionally biased region" description="Pro residues" evidence="4">
    <location>
        <begin position="66"/>
        <end position="79"/>
    </location>
</feature>
<feature type="active site" description="For sulfotransferase activity" evidence="1">
    <location>
        <position position="614"/>
    </location>
</feature>
<feature type="binding site" evidence="1">
    <location>
        <begin position="614"/>
        <end position="618"/>
    </location>
    <ligand>
        <name>3'-phosphoadenylyl sulfate</name>
        <dbReference type="ChEBI" id="CHEBI:58339"/>
    </ligand>
</feature>
<feature type="binding site" evidence="1">
    <location>
        <position position="712"/>
    </location>
    <ligand>
        <name>3'-phosphoadenylyl sulfate</name>
        <dbReference type="ChEBI" id="CHEBI:58339"/>
    </ligand>
</feature>
<feature type="binding site" evidence="1">
    <location>
        <begin position="833"/>
        <end position="837"/>
    </location>
    <ligand>
        <name>3'-phosphoadenylyl sulfate</name>
        <dbReference type="ChEBI" id="CHEBI:58339"/>
    </ligand>
</feature>
<feature type="glycosylation site" description="N-linked (GlcNAc...) asparagine" evidence="3">
    <location>
        <position position="351"/>
    </location>
</feature>
<feature type="glycosylation site" description="N-linked (GlcNAc...) asparagine" evidence="3">
    <location>
        <position position="401"/>
    </location>
</feature>
<feature type="glycosylation site" description="N-linked (GlcNAc...) asparagine" evidence="3">
    <location>
        <position position="667"/>
    </location>
</feature>
<feature type="glycosylation site" description="N-linked (GlcNAc...) asparagine" evidence="3">
    <location>
        <position position="727"/>
    </location>
</feature>
<feature type="glycosylation site" description="N-linked (GlcNAc...) asparagine" evidence="3">
    <location>
        <position position="803"/>
    </location>
</feature>
<feature type="disulfide bond" evidence="1">
    <location>
        <begin position="818"/>
        <end position="828"/>
    </location>
</feature>
<feature type="sequence conflict" description="In Ref. 2; BAC56412." evidence="6" ref="2">
    <original>T</original>
    <variation>S</variation>
    <location>
        <position position="735"/>
    </location>
</feature>
<feature type="sequence conflict" description="In Ref. 2; BAC56412." evidence="6" ref="2">
    <original>D</original>
    <variation>A</variation>
    <location>
        <position position="740"/>
    </location>
</feature>
<feature type="sequence conflict" description="In Ref. 2; BAC56412." evidence="6" ref="2">
    <original>Y</original>
    <variation>F</variation>
    <location>
        <position position="768"/>
    </location>
</feature>
<feature type="sequence conflict" description="In Ref. 2; BAC56412." evidence="6" ref="2">
    <original>I</original>
    <variation>S</variation>
    <location>
        <position position="791"/>
    </location>
</feature>
<feature type="sequence conflict" description="In Ref. 2; BAC56412." evidence="6" ref="2">
    <original>K</original>
    <variation>R</variation>
    <location>
        <position position="814"/>
    </location>
</feature>
<gene>
    <name type="primary">NDST2</name>
</gene>
<keyword id="KW-1015">Disulfide bond</keyword>
<keyword id="KW-0325">Glycoprotein</keyword>
<keyword id="KW-0333">Golgi apparatus</keyword>
<keyword id="KW-0378">Hydrolase</keyword>
<keyword id="KW-0472">Membrane</keyword>
<keyword id="KW-0511">Multifunctional enzyme</keyword>
<keyword id="KW-1185">Reference proteome</keyword>
<keyword id="KW-0735">Signal-anchor</keyword>
<keyword id="KW-0808">Transferase</keyword>
<keyword id="KW-0812">Transmembrane</keyword>
<keyword id="KW-1133">Transmembrane helix</keyword>
<proteinExistence type="evidence at transcript level"/>
<name>NDST2_BOVIN</name>